<name>ASCG_ACREG</name>
<organism>
    <name type="scientific">Acremonium egyptiacum</name>
    <name type="common">Oospora egyptiaca</name>
    <dbReference type="NCBI Taxonomy" id="749675"/>
    <lineage>
        <taxon>Eukaryota</taxon>
        <taxon>Fungi</taxon>
        <taxon>Dikarya</taxon>
        <taxon>Ascomycota</taxon>
        <taxon>Pezizomycotina</taxon>
        <taxon>Sordariomycetes</taxon>
        <taxon>Hypocreomycetidae</taxon>
        <taxon>Hypocreales</taxon>
        <taxon>Hypocreales incertae sedis</taxon>
        <taxon>Acremonium</taxon>
    </lineage>
</organism>
<accession>A0A455R4X0</accession>
<reference key="1">
    <citation type="journal article" date="2019" name="Proc. Natl. Acad. Sci. U.S.A.">
        <title>Complete biosynthetic pathways of ascofuranone and ascochlorin in Acremonium egyptiacum.</title>
        <authorList>
            <person name="Araki Y."/>
            <person name="Awakawa T."/>
            <person name="Matsuzaki M."/>
            <person name="Cho R."/>
            <person name="Matsuda Y."/>
            <person name="Hoshino S."/>
            <person name="Shinohara Y."/>
            <person name="Yamamoto M."/>
            <person name="Kido Y."/>
            <person name="Inaoka D.K."/>
            <person name="Nagamune K."/>
            <person name="Ito K."/>
            <person name="Abe I."/>
            <person name="Kita K."/>
        </authorList>
    </citation>
    <scope>NUCLEOTIDE SEQUENCE [GENOMIC DNA]</scope>
    <scope>FUNCTION</scope>
    <scope>CATALYTIC ACTIVITY</scope>
    <scope>INDUCTION</scope>
    <scope>PATHWAY</scope>
    <source>
        <strain>F-1392</strain>
    </source>
</reference>
<reference key="2">
    <citation type="journal article" date="2002" name="Biochim. Biophys. Acta">
        <title>Trypanosome alternative oxidase as a target of chemotherapy.</title>
        <authorList>
            <person name="Nihei C."/>
            <person name="Fukai Y."/>
            <person name="Kita K."/>
        </authorList>
    </citation>
    <scope>BIOTECHNOLOGY</scope>
</reference>
<reference key="3">
    <citation type="journal article" date="2003" name="Parasitol. Int.">
        <title>The efficacy of ascofuranone in a consecutive treatment on Trypanosoma brucei brucei in mice.</title>
        <authorList>
            <person name="Yabu Y."/>
            <person name="Yoshida A."/>
            <person name="Suzuki T."/>
            <person name="Nihei C."/>
            <person name="Kawai K."/>
            <person name="Minagawa N."/>
            <person name="Hosokawa T."/>
            <person name="Nagai K."/>
            <person name="Kita K."/>
            <person name="Ohta N."/>
        </authorList>
    </citation>
    <scope>BIOTECHNOLOGY</scope>
</reference>
<reference key="4">
    <citation type="journal article" date="2010" name="Parasitol. Int.">
        <title>Trypanosome alternative oxidase, a potential therapeutic target for sleeping sickness, is conserved among Trypanosoma brucei subspecies.</title>
        <authorList>
            <person name="Nakamura K."/>
            <person name="Fujioka S."/>
            <person name="Fukumoto S."/>
            <person name="Inoue N."/>
            <person name="Sakamoto K."/>
            <person name="Hirata H."/>
            <person name="Kido Y."/>
            <person name="Yabu Y."/>
            <person name="Suzuki T."/>
            <person name="Watanabe Y."/>
            <person name="Saimoto H."/>
            <person name="Akiyama H."/>
            <person name="Kita K."/>
        </authorList>
    </citation>
    <scope>BIOTECHNOLOGY</scope>
</reference>
<keyword id="KW-0325">Glycoprotein</keyword>
<keyword id="KW-0349">Heme</keyword>
<keyword id="KW-0408">Iron</keyword>
<keyword id="KW-0472">Membrane</keyword>
<keyword id="KW-0479">Metal-binding</keyword>
<keyword id="KW-0503">Monooxygenase</keyword>
<keyword id="KW-0560">Oxidoreductase</keyword>
<keyword id="KW-0812">Transmembrane</keyword>
<keyword id="KW-1133">Transmembrane helix</keyword>
<dbReference type="EC" id="1.14.14.-" evidence="7"/>
<dbReference type="EMBL" id="LC406756">
    <property type="protein sequence ID" value="BBF25319.1"/>
    <property type="molecule type" value="Genomic_DNA"/>
</dbReference>
<dbReference type="SMR" id="A0A455R4X0"/>
<dbReference type="GlyCosmos" id="A0A455R4X0">
    <property type="glycosylation" value="1 site, No reported glycans"/>
</dbReference>
<dbReference type="UniPathway" id="UPA00213"/>
<dbReference type="GO" id="GO:0016020">
    <property type="term" value="C:membrane"/>
    <property type="evidence" value="ECO:0007669"/>
    <property type="project" value="UniProtKB-SubCell"/>
</dbReference>
<dbReference type="GO" id="GO:0020037">
    <property type="term" value="F:heme binding"/>
    <property type="evidence" value="ECO:0007669"/>
    <property type="project" value="InterPro"/>
</dbReference>
<dbReference type="GO" id="GO:0005506">
    <property type="term" value="F:iron ion binding"/>
    <property type="evidence" value="ECO:0007669"/>
    <property type="project" value="InterPro"/>
</dbReference>
<dbReference type="GO" id="GO:0004497">
    <property type="term" value="F:monooxygenase activity"/>
    <property type="evidence" value="ECO:0007669"/>
    <property type="project" value="UniProtKB-KW"/>
</dbReference>
<dbReference type="GO" id="GO:0016705">
    <property type="term" value="F:oxidoreductase activity, acting on paired donors, with incorporation or reduction of molecular oxygen"/>
    <property type="evidence" value="ECO:0007669"/>
    <property type="project" value="InterPro"/>
</dbReference>
<dbReference type="GO" id="GO:0019748">
    <property type="term" value="P:secondary metabolic process"/>
    <property type="evidence" value="ECO:0007669"/>
    <property type="project" value="UniProtKB-ARBA"/>
</dbReference>
<dbReference type="GO" id="GO:0016114">
    <property type="term" value="P:terpenoid biosynthetic process"/>
    <property type="evidence" value="ECO:0007669"/>
    <property type="project" value="UniProtKB-UniPathway"/>
</dbReference>
<dbReference type="CDD" id="cd11041">
    <property type="entry name" value="CYP503A1-like"/>
    <property type="match status" value="1"/>
</dbReference>
<dbReference type="Gene3D" id="1.10.630.10">
    <property type="entry name" value="Cytochrome P450"/>
    <property type="match status" value="1"/>
</dbReference>
<dbReference type="InterPro" id="IPR001128">
    <property type="entry name" value="Cyt_P450"/>
</dbReference>
<dbReference type="InterPro" id="IPR017972">
    <property type="entry name" value="Cyt_P450_CS"/>
</dbReference>
<dbReference type="InterPro" id="IPR002403">
    <property type="entry name" value="Cyt_P450_E_grp-IV"/>
</dbReference>
<dbReference type="InterPro" id="IPR036396">
    <property type="entry name" value="Cyt_P450_sf"/>
</dbReference>
<dbReference type="PANTHER" id="PTHR46206">
    <property type="entry name" value="CYTOCHROME P450"/>
    <property type="match status" value="1"/>
</dbReference>
<dbReference type="PANTHER" id="PTHR46206:SF6">
    <property type="entry name" value="CYTOCHROME P450 MONOOXYGENASE AN1598-RELATED"/>
    <property type="match status" value="1"/>
</dbReference>
<dbReference type="Pfam" id="PF00067">
    <property type="entry name" value="p450"/>
    <property type="match status" value="1"/>
</dbReference>
<dbReference type="PRINTS" id="PR00465">
    <property type="entry name" value="EP450IV"/>
</dbReference>
<dbReference type="SUPFAM" id="SSF48264">
    <property type="entry name" value="Cytochrome P450"/>
    <property type="match status" value="1"/>
</dbReference>
<dbReference type="PROSITE" id="PS00086">
    <property type="entry name" value="CYTOCHROME_P450"/>
    <property type="match status" value="1"/>
</dbReference>
<gene>
    <name evidence="8" type="primary">ascG</name>
</gene>
<feature type="chain" id="PRO_0000449000" description="Cytochrome P450 monooxygenase ascG">
    <location>
        <begin position="1"/>
        <end position="534"/>
    </location>
</feature>
<feature type="transmembrane region" description="Helical" evidence="2">
    <location>
        <begin position="13"/>
        <end position="33"/>
    </location>
</feature>
<feature type="binding site" description="axial binding residue" evidence="1">
    <location>
        <position position="469"/>
    </location>
    <ligand>
        <name>heme</name>
        <dbReference type="ChEBI" id="CHEBI:30413"/>
    </ligand>
    <ligandPart>
        <name>Fe</name>
        <dbReference type="ChEBI" id="CHEBI:18248"/>
    </ligandPart>
</feature>
<feature type="glycosylation site" description="N-linked (GlcNAc...) asparagine" evidence="3">
    <location>
        <position position="466"/>
    </location>
</feature>
<evidence type="ECO:0000250" key="1">
    <source>
        <dbReference type="UniProtKB" id="P04798"/>
    </source>
</evidence>
<evidence type="ECO:0000255" key="2"/>
<evidence type="ECO:0000255" key="3">
    <source>
        <dbReference type="PROSITE-ProRule" id="PRU00498"/>
    </source>
</evidence>
<evidence type="ECO:0000269" key="4">
    <source>
    </source>
</evidence>
<evidence type="ECO:0000269" key="5">
    <source>
    </source>
</evidence>
<evidence type="ECO:0000269" key="6">
    <source>
    </source>
</evidence>
<evidence type="ECO:0000269" key="7">
    <source>
    </source>
</evidence>
<evidence type="ECO:0000303" key="8">
    <source>
    </source>
</evidence>
<evidence type="ECO:0000305" key="9"/>
<comment type="function">
    <text evidence="7">Cytochrome P450 monooxygenase; part of the asc-1 gene cluster that mediates the biosynthesis of both ascochlorin and ascofuranone, a strong inhibitor of cyanide-insensitive alternative oxidases and a promising drug candidate against African trypanosomiasis (PubMed:30952781). The first step in the pathway is performed by the non-reducing polyketide synthase ascC that produces orsellinic acid by condensing acetyl-CoA with 3 malonyl-CoA units (PubMed:30952781). Orsellinic acid is then prenylated by the prenyltransferase ascA to yield ilicicolinic acid B (PubMed:30952781). Ilicicolinic acid B is further reduced to ilicicolin B by the reductase ascB (PubMed:30952781). The halogenase ascD then chlorinates ilicicolin B to produce ilicicolin A which is converted to ilicicolin A epoxide by the cytochrome P450 monooxygenase ascE that catalyzes stereoselective epoxidation of the terminal double bond of the prenyl group (PubMed:30952781). Ilicicolin A epoxide is the last common precursor for the biosynthesis of ascofuranone and ascochlorin (PubMed:30952781). The terpene cyclase ascF produces a monocyclic terpene, and the cyclization reaction is proposed to be initiated by protonation of the terminal epoxide of ilicicolin A epoxide to generate a monocyclic tertiarycation, which is followed by a series of hydride and methyl shifts with abstraction of proton, leading to the formation of the (14S,15R,19R)-trimethylcyclohexanone ring structure of ilicicolin C, which is finally reduced to ascochlorin by the dehydrogenase ascG (PubMed:30952781). On the other hand, ilicicolin A epoxide is hydroxylated by the cytochrome P450 monooxygenase ascH, and the resultant product is cyclized by the terpene cyclase ascI to ascofuranol via protonation-initiated epoxide ring opening, which facilitates the 6-endo-tet cyclization to form the tetrahy-drofuran ring (PubMed:30952781). Finally, ascofuranol is oxidized into ascofuranone by ascJ (PubMed:30952781).</text>
</comment>
<comment type="catalytic activity">
    <reaction evidence="7">
        <text>ilicicolin C + NADPH + O2 + H(+) = ascochlorin + NADP(+) + 2 H2O</text>
        <dbReference type="Rhea" id="RHEA:63100"/>
        <dbReference type="ChEBI" id="CHEBI:15377"/>
        <dbReference type="ChEBI" id="CHEBI:15378"/>
        <dbReference type="ChEBI" id="CHEBI:15379"/>
        <dbReference type="ChEBI" id="CHEBI:57783"/>
        <dbReference type="ChEBI" id="CHEBI:58349"/>
        <dbReference type="ChEBI" id="CHEBI:146156"/>
        <dbReference type="ChEBI" id="CHEBI:146157"/>
    </reaction>
    <physiologicalReaction direction="left-to-right" evidence="7">
        <dbReference type="Rhea" id="RHEA:63101"/>
    </physiologicalReaction>
</comment>
<comment type="cofactor">
    <cofactor evidence="1">
        <name>heme</name>
        <dbReference type="ChEBI" id="CHEBI:30413"/>
    </cofactor>
</comment>
<comment type="pathway">
    <text evidence="7">Secondary metabolite biosynthesis; terpenoid biosynthesis.</text>
</comment>
<comment type="subcellular location">
    <subcellularLocation>
        <location evidence="2">Membrane</location>
        <topology evidence="2">Single-pass membrane protein</topology>
    </subcellularLocation>
</comment>
<comment type="induction">
    <text evidence="7">Expression is induced on AF medium.</text>
</comment>
<comment type="biotechnology">
    <text evidence="4 5 6">Ascofuranone is a specific inhibitor of trypanosome alternative oxidase (TAO), and quickly kills African trypanosomes in vitro and cures infected mice. As an essential factor for trypanosome survival, TAO is a promising drug target due to the absence of alternative oxidases in the mammalian host.</text>
</comment>
<comment type="similarity">
    <text evidence="9">Belongs to the cytochrome P450 family.</text>
</comment>
<sequence>MGSLLFDSPVGRFVASFPALSAAAGLIVAISFIYIRFIKTPKLDLPVVGNPGDKWDAQKHIVAGARKYPDTPYILPMDPPIVVLPIKIQDEVRNLPENVVSFTKEHQRNFFAQYTGIGDHRPEMITAIRQDLTRHIVSTIPGLQEEVRYGFDKEFGDCKDWTPFPLYMKVLRIVALTSGRVFVGRPLSREEEWLQRTISYTMDCVKARNAIREYPWWKRRWVTSSLPEIAKLTEHRTRGGVLLKPIMDAQLAKDSKREKIINEETGDEEGNFIEWLLKHTPGDLKMDPENLALNQMVLAFASVHTSSMSVTHAILELVTRPEYFAPLREELEEVRRADGHTVDDDGYIRLKKESINKLRKLDSFMKESQRFNPPISTSGTRICTADLKLSTGHTLPKGTRICFPSYDVHHNPKTTTYSPEYNPPGYTPPDQFDGLRFFKLREMPGKESRHQFATANHESLVFGFGNHTCPGRFFAANQIKIILAELLMNWDVRLKGDVEQKGGPEKRPQNMVVDLVITPNPMAMVEMKRRSRAV</sequence>
<proteinExistence type="evidence at protein level"/>
<protein>
    <recommendedName>
        <fullName evidence="8">Cytochrome P450 monooxygenase ascG</fullName>
        <ecNumber evidence="7">1.14.14.-</ecNumber>
    </recommendedName>
    <alternativeName>
        <fullName evidence="8">Ascofuranone/ascochlorin biosynthesis clusters protein G</fullName>
    </alternativeName>
</protein>